<reference key="1">
    <citation type="submission" date="2007-11" db="EMBL/GenBank/DDBJ databases">
        <authorList>
            <consortium name="The Salmonella enterica serovar Paratyphi B Genome Sequencing Project"/>
            <person name="McClelland M."/>
            <person name="Sanderson E.K."/>
            <person name="Porwollik S."/>
            <person name="Spieth J."/>
            <person name="Clifton W.S."/>
            <person name="Fulton R."/>
            <person name="Cordes M."/>
            <person name="Wollam A."/>
            <person name="Shah N."/>
            <person name="Pepin K."/>
            <person name="Bhonagiri V."/>
            <person name="Nash W."/>
            <person name="Johnson M."/>
            <person name="Thiruvilangam P."/>
            <person name="Wilson R."/>
        </authorList>
    </citation>
    <scope>NUCLEOTIDE SEQUENCE [LARGE SCALE GENOMIC DNA]</scope>
    <source>
        <strain>ATCC BAA-1250 / SPB7</strain>
    </source>
</reference>
<name>GHRA_SALPB</name>
<keyword id="KW-0963">Cytoplasm</keyword>
<keyword id="KW-0520">NAD</keyword>
<keyword id="KW-0521">NADP</keyword>
<keyword id="KW-0560">Oxidoreductase</keyword>
<gene>
    <name evidence="1" type="primary">ghrA</name>
    <name type="ordered locus">SPAB_02402</name>
</gene>
<dbReference type="EC" id="1.1.1.79" evidence="1"/>
<dbReference type="EC" id="1.1.1.81" evidence="1"/>
<dbReference type="EMBL" id="CP000886">
    <property type="protein sequence ID" value="ABX67784.1"/>
    <property type="molecule type" value="Genomic_DNA"/>
</dbReference>
<dbReference type="RefSeq" id="WP_000402550.1">
    <property type="nucleotide sequence ID" value="NC_010102.1"/>
</dbReference>
<dbReference type="SMR" id="A9N5T3"/>
<dbReference type="KEGG" id="spq:SPAB_02402"/>
<dbReference type="PATRIC" id="fig|1016998.12.peg.2273"/>
<dbReference type="HOGENOM" id="CLU_019796_1_0_6"/>
<dbReference type="BioCyc" id="SENT1016998:SPAB_RS09780-MONOMER"/>
<dbReference type="Proteomes" id="UP000008556">
    <property type="component" value="Chromosome"/>
</dbReference>
<dbReference type="GO" id="GO:0005737">
    <property type="term" value="C:cytoplasm"/>
    <property type="evidence" value="ECO:0007669"/>
    <property type="project" value="UniProtKB-SubCell"/>
</dbReference>
<dbReference type="GO" id="GO:0030267">
    <property type="term" value="F:glyoxylate reductase (NADPH) activity"/>
    <property type="evidence" value="ECO:0007669"/>
    <property type="project" value="UniProtKB-UniRule"/>
</dbReference>
<dbReference type="GO" id="GO:0008465">
    <property type="term" value="F:hydroxypyruvate reductase (NADH) activity"/>
    <property type="evidence" value="ECO:0007669"/>
    <property type="project" value="RHEA"/>
</dbReference>
<dbReference type="GO" id="GO:0120509">
    <property type="term" value="F:hydroxypyruvate reductase (NADPH) activity"/>
    <property type="evidence" value="ECO:0007669"/>
    <property type="project" value="RHEA"/>
</dbReference>
<dbReference type="GO" id="GO:0051287">
    <property type="term" value="F:NAD binding"/>
    <property type="evidence" value="ECO:0007669"/>
    <property type="project" value="InterPro"/>
</dbReference>
<dbReference type="CDD" id="cd12164">
    <property type="entry name" value="GDH_like_2"/>
    <property type="match status" value="1"/>
</dbReference>
<dbReference type="FunFam" id="3.40.50.720:FF:000110">
    <property type="entry name" value="Glyoxylate/hydroxypyruvate reductase A"/>
    <property type="match status" value="1"/>
</dbReference>
<dbReference type="Gene3D" id="3.40.50.720">
    <property type="entry name" value="NAD(P)-binding Rossmann-like Domain"/>
    <property type="match status" value="2"/>
</dbReference>
<dbReference type="HAMAP" id="MF_01666">
    <property type="entry name" value="2_Hacid_dh_C_GhrA"/>
    <property type="match status" value="1"/>
</dbReference>
<dbReference type="InterPro" id="IPR006140">
    <property type="entry name" value="D-isomer_DH_NAD-bd"/>
</dbReference>
<dbReference type="InterPro" id="IPR023514">
    <property type="entry name" value="GhrA_Enterobacterales"/>
</dbReference>
<dbReference type="InterPro" id="IPR036291">
    <property type="entry name" value="NAD(P)-bd_dom_sf"/>
</dbReference>
<dbReference type="NCBIfam" id="NF012013">
    <property type="entry name" value="PRK15469.1"/>
    <property type="match status" value="1"/>
</dbReference>
<dbReference type="PANTHER" id="PTHR43333">
    <property type="entry name" value="2-HACID_DH_C DOMAIN-CONTAINING PROTEIN"/>
    <property type="match status" value="1"/>
</dbReference>
<dbReference type="PANTHER" id="PTHR43333:SF1">
    <property type="entry name" value="D-ISOMER SPECIFIC 2-HYDROXYACID DEHYDROGENASE NAD-BINDING DOMAIN-CONTAINING PROTEIN"/>
    <property type="match status" value="1"/>
</dbReference>
<dbReference type="Pfam" id="PF02826">
    <property type="entry name" value="2-Hacid_dh_C"/>
    <property type="match status" value="1"/>
</dbReference>
<dbReference type="SUPFAM" id="SSF51735">
    <property type="entry name" value="NAD(P)-binding Rossmann-fold domains"/>
    <property type="match status" value="1"/>
</dbReference>
<feature type="chain" id="PRO_0000348370" description="Glyoxylate/hydroxypyruvate reductase A">
    <location>
        <begin position="1"/>
        <end position="312"/>
    </location>
</feature>
<feature type="active site" evidence="1">
    <location>
        <position position="227"/>
    </location>
</feature>
<feature type="active site" description="Proton donor" evidence="1">
    <location>
        <position position="275"/>
    </location>
</feature>
<sequence>MEIIFYHPTFNAAWWVNALEKALPHARVREWKVGDNNPADYALVWQPPVEMLAGRRLKAVFALGAGVDAILSKLNAHPEMLDASIPLFRLEDTGMGLQMQEYAVSQVLHWFRRFDDYQALKNQALWKPLPEYTREEFSVGIMGAGVLGAKVAESLQAWGFPLRCWSRSRKSWPGVESYVGREELHAFLNQTRVLINLLPNTAQTVGIINSELLDQLPDGAYVLNLARGVHVQEADLLAALDSGKLKGAMLDVFSQEPLPQESPLWRHPRVAMTPHIAAVTRPAEAIDYISRTIAQLEKGESVTGQVDRARGY</sequence>
<proteinExistence type="inferred from homology"/>
<accession>A9N5T3</accession>
<organism>
    <name type="scientific">Salmonella paratyphi B (strain ATCC BAA-1250 / SPB7)</name>
    <dbReference type="NCBI Taxonomy" id="1016998"/>
    <lineage>
        <taxon>Bacteria</taxon>
        <taxon>Pseudomonadati</taxon>
        <taxon>Pseudomonadota</taxon>
        <taxon>Gammaproteobacteria</taxon>
        <taxon>Enterobacterales</taxon>
        <taxon>Enterobacteriaceae</taxon>
        <taxon>Salmonella</taxon>
    </lineage>
</organism>
<comment type="function">
    <text evidence="1">Catalyzes the NADPH-dependent reduction of glyoxylate and hydroxypyruvate into glycolate and glycerate, respectively.</text>
</comment>
<comment type="catalytic activity">
    <reaction evidence="1">
        <text>glycolate + NADP(+) = glyoxylate + NADPH + H(+)</text>
        <dbReference type="Rhea" id="RHEA:10992"/>
        <dbReference type="ChEBI" id="CHEBI:15378"/>
        <dbReference type="ChEBI" id="CHEBI:29805"/>
        <dbReference type="ChEBI" id="CHEBI:36655"/>
        <dbReference type="ChEBI" id="CHEBI:57783"/>
        <dbReference type="ChEBI" id="CHEBI:58349"/>
        <dbReference type="EC" id="1.1.1.79"/>
    </reaction>
</comment>
<comment type="catalytic activity">
    <reaction evidence="1">
        <text>(R)-glycerate + NAD(+) = 3-hydroxypyruvate + NADH + H(+)</text>
        <dbReference type="Rhea" id="RHEA:17905"/>
        <dbReference type="ChEBI" id="CHEBI:15378"/>
        <dbReference type="ChEBI" id="CHEBI:16659"/>
        <dbReference type="ChEBI" id="CHEBI:17180"/>
        <dbReference type="ChEBI" id="CHEBI:57540"/>
        <dbReference type="ChEBI" id="CHEBI:57945"/>
        <dbReference type="EC" id="1.1.1.81"/>
    </reaction>
</comment>
<comment type="catalytic activity">
    <reaction evidence="1">
        <text>(R)-glycerate + NADP(+) = 3-hydroxypyruvate + NADPH + H(+)</text>
        <dbReference type="Rhea" id="RHEA:18657"/>
        <dbReference type="ChEBI" id="CHEBI:15378"/>
        <dbReference type="ChEBI" id="CHEBI:16659"/>
        <dbReference type="ChEBI" id="CHEBI:17180"/>
        <dbReference type="ChEBI" id="CHEBI:57783"/>
        <dbReference type="ChEBI" id="CHEBI:58349"/>
        <dbReference type="EC" id="1.1.1.81"/>
    </reaction>
</comment>
<comment type="subcellular location">
    <subcellularLocation>
        <location evidence="1">Cytoplasm</location>
    </subcellularLocation>
</comment>
<comment type="similarity">
    <text evidence="1">Belongs to the D-isomer specific 2-hydroxyacid dehydrogenase family. GhrA subfamily.</text>
</comment>
<protein>
    <recommendedName>
        <fullName evidence="1">Glyoxylate/hydroxypyruvate reductase A</fullName>
        <ecNumber evidence="1">1.1.1.79</ecNumber>
        <ecNumber evidence="1">1.1.1.81</ecNumber>
    </recommendedName>
    <alternativeName>
        <fullName evidence="1">2-ketoacid reductase</fullName>
    </alternativeName>
</protein>
<evidence type="ECO:0000255" key="1">
    <source>
        <dbReference type="HAMAP-Rule" id="MF_01666"/>
    </source>
</evidence>